<organism>
    <name type="scientific">Aliarcobacter butzleri (strain RM4018)</name>
    <name type="common">Arcobacter butzleri</name>
    <dbReference type="NCBI Taxonomy" id="367737"/>
    <lineage>
        <taxon>Bacteria</taxon>
        <taxon>Pseudomonadati</taxon>
        <taxon>Campylobacterota</taxon>
        <taxon>Epsilonproteobacteria</taxon>
        <taxon>Campylobacterales</taxon>
        <taxon>Arcobacteraceae</taxon>
        <taxon>Aliarcobacter</taxon>
    </lineage>
</organism>
<comment type="function">
    <text evidence="1">Na(+)/H(+) antiporter that extrudes sodium in exchange for external protons.</text>
</comment>
<comment type="catalytic activity">
    <reaction evidence="1">
        <text>Na(+)(in) + 2 H(+)(out) = Na(+)(out) + 2 H(+)(in)</text>
        <dbReference type="Rhea" id="RHEA:29251"/>
        <dbReference type="ChEBI" id="CHEBI:15378"/>
        <dbReference type="ChEBI" id="CHEBI:29101"/>
    </reaction>
    <physiologicalReaction direction="left-to-right" evidence="1">
        <dbReference type="Rhea" id="RHEA:29252"/>
    </physiologicalReaction>
</comment>
<comment type="subcellular location">
    <subcellularLocation>
        <location evidence="1">Cell inner membrane</location>
        <topology evidence="1">Multi-pass membrane protein</topology>
    </subcellularLocation>
</comment>
<comment type="similarity">
    <text evidence="1">Belongs to the NhaA Na(+)/H(+) (TC 2.A.33) antiporter family.</text>
</comment>
<dbReference type="EMBL" id="CP000361">
    <property type="protein sequence ID" value="ABV67988.1"/>
    <property type="molecule type" value="Genomic_DNA"/>
</dbReference>
<dbReference type="RefSeq" id="WP_012147711.1">
    <property type="nucleotide sequence ID" value="NC_009850.1"/>
</dbReference>
<dbReference type="SMR" id="A8EVL5"/>
<dbReference type="STRING" id="367737.Abu_1741"/>
<dbReference type="GeneID" id="24303994"/>
<dbReference type="KEGG" id="abu:Abu_1741"/>
<dbReference type="eggNOG" id="COG3004">
    <property type="taxonomic scope" value="Bacteria"/>
</dbReference>
<dbReference type="HOGENOM" id="CLU_015803_1_2_7"/>
<dbReference type="Proteomes" id="UP000001136">
    <property type="component" value="Chromosome"/>
</dbReference>
<dbReference type="GO" id="GO:0005886">
    <property type="term" value="C:plasma membrane"/>
    <property type="evidence" value="ECO:0007669"/>
    <property type="project" value="UniProtKB-SubCell"/>
</dbReference>
<dbReference type="GO" id="GO:0015385">
    <property type="term" value="F:sodium:proton antiporter activity"/>
    <property type="evidence" value="ECO:0007669"/>
    <property type="project" value="TreeGrafter"/>
</dbReference>
<dbReference type="GO" id="GO:0006885">
    <property type="term" value="P:regulation of pH"/>
    <property type="evidence" value="ECO:0007669"/>
    <property type="project" value="InterPro"/>
</dbReference>
<dbReference type="Gene3D" id="1.20.1530.10">
    <property type="entry name" value="Na+/H+ antiporter like domain"/>
    <property type="match status" value="1"/>
</dbReference>
<dbReference type="HAMAP" id="MF_01844">
    <property type="entry name" value="NhaA"/>
    <property type="match status" value="1"/>
</dbReference>
<dbReference type="InterPro" id="IPR023171">
    <property type="entry name" value="Na/H_antiporter_dom_sf"/>
</dbReference>
<dbReference type="InterPro" id="IPR004670">
    <property type="entry name" value="NhaA"/>
</dbReference>
<dbReference type="NCBIfam" id="TIGR00773">
    <property type="entry name" value="NhaA"/>
    <property type="match status" value="1"/>
</dbReference>
<dbReference type="NCBIfam" id="NF007111">
    <property type="entry name" value="PRK09560.1"/>
    <property type="match status" value="1"/>
</dbReference>
<dbReference type="NCBIfam" id="NF007112">
    <property type="entry name" value="PRK09561.1"/>
    <property type="match status" value="1"/>
</dbReference>
<dbReference type="PANTHER" id="PTHR30341:SF0">
    <property type="entry name" value="NA(+)_H(+) ANTIPORTER NHAA"/>
    <property type="match status" value="1"/>
</dbReference>
<dbReference type="PANTHER" id="PTHR30341">
    <property type="entry name" value="SODIUM ION/PROTON ANTIPORTER NHAA-RELATED"/>
    <property type="match status" value="1"/>
</dbReference>
<dbReference type="Pfam" id="PF06965">
    <property type="entry name" value="Na_H_antiport_1"/>
    <property type="match status" value="1"/>
</dbReference>
<keyword id="KW-0050">Antiport</keyword>
<keyword id="KW-0997">Cell inner membrane</keyword>
<keyword id="KW-1003">Cell membrane</keyword>
<keyword id="KW-0406">Ion transport</keyword>
<keyword id="KW-0472">Membrane</keyword>
<keyword id="KW-1185">Reference proteome</keyword>
<keyword id="KW-0915">Sodium</keyword>
<keyword id="KW-0739">Sodium transport</keyword>
<keyword id="KW-0812">Transmembrane</keyword>
<keyword id="KW-1133">Transmembrane helix</keyword>
<keyword id="KW-0813">Transport</keyword>
<protein>
    <recommendedName>
        <fullName evidence="1">Na(+)/H(+) antiporter NhaA 2</fullName>
    </recommendedName>
    <alternativeName>
        <fullName evidence="1">Sodium/proton antiporter NhaA 2</fullName>
    </alternativeName>
</protein>
<reference key="1">
    <citation type="journal article" date="2007" name="PLoS ONE">
        <title>The complete genome sequence and analysis of the Epsilonproteobacterium Arcobacter butzleri.</title>
        <authorList>
            <person name="Miller W.G."/>
            <person name="Parker C.T."/>
            <person name="Rubenfield M."/>
            <person name="Mendz G.L."/>
            <person name="Woesten M.M.S.M."/>
            <person name="Ussery D.W."/>
            <person name="Stolz J.F."/>
            <person name="Binnewies T.T."/>
            <person name="Hallin P.F."/>
            <person name="Wang G."/>
            <person name="Malek J.A."/>
            <person name="Rogosin A."/>
            <person name="Stanker L.H."/>
            <person name="Mandrell R.E."/>
        </authorList>
    </citation>
    <scope>NUCLEOTIDE SEQUENCE [LARGE SCALE GENOMIC DNA]</scope>
    <source>
        <strain>RM4018</strain>
    </source>
</reference>
<feature type="chain" id="PRO_0000334227" description="Na(+)/H(+) antiporter NhaA 2">
    <location>
        <begin position="1"/>
        <end position="396"/>
    </location>
</feature>
<feature type="transmembrane region" description="Helical" evidence="1">
    <location>
        <begin position="17"/>
        <end position="37"/>
    </location>
</feature>
<feature type="transmembrane region" description="Helical" evidence="1">
    <location>
        <begin position="62"/>
        <end position="82"/>
    </location>
</feature>
<feature type="transmembrane region" description="Helical" evidence="1">
    <location>
        <begin position="98"/>
        <end position="118"/>
    </location>
</feature>
<feature type="transmembrane region" description="Helical" evidence="1">
    <location>
        <begin position="125"/>
        <end position="145"/>
    </location>
</feature>
<feature type="transmembrane region" description="Helical" evidence="1">
    <location>
        <begin position="154"/>
        <end position="174"/>
    </location>
</feature>
<feature type="transmembrane region" description="Helical" evidence="1">
    <location>
        <begin position="179"/>
        <end position="199"/>
    </location>
</feature>
<feature type="transmembrane region" description="Helical" evidence="1">
    <location>
        <begin position="209"/>
        <end position="229"/>
    </location>
</feature>
<feature type="transmembrane region" description="Helical" evidence="1">
    <location>
        <begin position="268"/>
        <end position="288"/>
    </location>
</feature>
<feature type="transmembrane region" description="Helical" evidence="1">
    <location>
        <begin position="296"/>
        <end position="316"/>
    </location>
</feature>
<feature type="transmembrane region" description="Helical" evidence="1">
    <location>
        <begin position="337"/>
        <end position="357"/>
    </location>
</feature>
<feature type="transmembrane region" description="Helical" evidence="1">
    <location>
        <begin position="368"/>
        <end position="388"/>
    </location>
</feature>
<accession>A8EVL5</accession>
<name>NHAA2_ALIB4</name>
<proteinExistence type="inferred from homology"/>
<sequence length="396" mass="43257">MKNSLFLIKDFISKETLSGLILFVVTVLAVTIANSDFGSYYFELFSTQLGINFGQLNASMSLLHWINDVLMAIFFLVVGLEIKREMLIGELSSVKKASFPIIAAIGGMIVPAILYISLNPDHITGFGVPMATDIAFALGILMLLGNKVNPAIKLFLVTLAVVDDLGAIVVVAIFYTNELHFEYFLYAFAVYSIIWFLNYKNVQKLTPYIILGVFLWIFIHKTGIHSTIAGVLLAFAIPLNKKADLEESVENLSVDNPLVKLEHALHNFSAFIIMPLFAFANAGVIIDFSNVIEHQLIVLGVALGLIIGKPIGIFSFTYLATKLKISVKPENVTWNDIFAVGFLGGIGFTMSIFISHLAFSDQTIVGAVKLGIFASSVIAAIIGSVLLILKAKKVEP</sequence>
<evidence type="ECO:0000255" key="1">
    <source>
        <dbReference type="HAMAP-Rule" id="MF_01844"/>
    </source>
</evidence>
<gene>
    <name evidence="1" type="primary">nhaA2</name>
    <name type="ordered locus">Abu_1741</name>
</gene>